<feature type="signal peptide" evidence="1">
    <location>
        <begin position="1"/>
        <end position="21"/>
    </location>
</feature>
<feature type="chain" id="PRO_0000333690" description="Calcium-activated chloride channel regulator 1">
    <location>
        <begin position="22"/>
        <end position="914"/>
    </location>
</feature>
<feature type="domain" description="VWFA" evidence="2">
    <location>
        <begin position="306"/>
        <end position="475"/>
    </location>
</feature>
<feature type="region of interest" description="Metalloprotease domain" evidence="13">
    <location>
        <begin position="46"/>
        <end position="199"/>
    </location>
</feature>
<feature type="active site" evidence="17">
    <location>
        <position position="157"/>
    </location>
</feature>
<feature type="binding site" evidence="17">
    <location>
        <position position="156"/>
    </location>
    <ligand>
        <name>Zn(2+)</name>
        <dbReference type="ChEBI" id="CHEBI:29105"/>
        <note>catalytic</note>
    </ligand>
</feature>
<feature type="binding site" evidence="17">
    <location>
        <position position="160"/>
    </location>
    <ligand>
        <name>Zn(2+)</name>
        <dbReference type="ChEBI" id="CHEBI:29105"/>
        <note>catalytic</note>
    </ligand>
</feature>
<feature type="binding site" evidence="17">
    <location>
        <position position="167"/>
    </location>
    <ligand>
        <name>Zn(2+)</name>
        <dbReference type="ChEBI" id="CHEBI:29105"/>
        <note>catalytic</note>
    </ligand>
</feature>
<feature type="site" description="Cleavage; by autolysis" evidence="13">
    <location>
        <begin position="694"/>
        <end position="695"/>
    </location>
</feature>
<feature type="glycosylation site" description="N-linked (GlcNAc...) asparagine" evidence="1">
    <location>
        <position position="503"/>
    </location>
</feature>
<feature type="glycosylation site" description="N-linked (GlcNAc...) asparagine" evidence="1">
    <location>
        <position position="585"/>
    </location>
</feature>
<feature type="glycosylation site" description="N-linked (GlcNAc...) asparagine" evidence="1">
    <location>
        <position position="770"/>
    </location>
</feature>
<feature type="glycosylation site" description="N-linked (GlcNAc...) asparagine" evidence="1">
    <location>
        <position position="804"/>
    </location>
</feature>
<feature type="glycosylation site" description="N-linked (GlcNAc...) asparagine" evidence="1">
    <location>
        <position position="810"/>
    </location>
</feature>
<feature type="glycosylation site" description="N-linked (GlcNAc...) asparagine" evidence="1">
    <location>
        <position position="831"/>
    </location>
</feature>
<feature type="glycosylation site" description="N-linked (GlcNAc...) asparagine" evidence="1">
    <location>
        <position position="836"/>
    </location>
</feature>
<feature type="glycosylation site" description="N-linked (GlcNAc...) asparagine" evidence="1">
    <location>
        <position position="890"/>
    </location>
</feature>
<feature type="sequence variant" id="VAR_054654" description="In dbSNP:rs2145412." evidence="3 7 14 15">
    <original>L</original>
    <variation>F</variation>
    <location>
        <position position="65"/>
    </location>
</feature>
<feature type="sequence variant" id="VAR_054655" description="In dbSNP:rs2753386." evidence="14">
    <original>R</original>
    <variation>K</variation>
    <location>
        <position position="152"/>
    </location>
</feature>
<feature type="sequence variant" id="VAR_043146" description="In dbSNP:rs2734705." evidence="3 7 14 15">
    <original>N</original>
    <variation>S</variation>
    <location>
        <position position="357"/>
    </location>
</feature>
<feature type="sequence variant" id="VAR_054656" description="In dbSNP:rs1142185.">
    <original>E</original>
    <variation>V</variation>
    <location>
        <position position="406"/>
    </location>
</feature>
<feature type="sequence variant" id="VAR_054657" description="In dbSNP:rs4647852.">
    <original>K</original>
    <variation>R</variation>
    <location>
        <position position="426"/>
    </location>
</feature>
<feature type="sequence variant" id="VAR_043147" description="In dbSNP:rs2791494." evidence="3 7 14 15">
    <original>M</original>
    <variation>T</variation>
    <location>
        <position position="524"/>
    </location>
</feature>
<feature type="sequence variant" id="VAR_054658" description="In dbSNP:rs5744409.">
    <original>Y</original>
    <variation>H</variation>
    <location>
        <position position="661"/>
    </location>
</feature>
<feature type="sequence variant" id="VAR_054659" description="In dbSNP:rs2791483." evidence="14">
    <original>K</original>
    <variation>N</variation>
    <location>
        <position position="760"/>
    </location>
</feature>
<feature type="mutagenesis site" description="Reduces proteolytic cleavage." evidence="13">
    <original>Q</original>
    <variation>A</variation>
    <location>
        <position position="150"/>
    </location>
</feature>
<feature type="mutagenesis site" description="Abolishes proteolytic cleavage." evidence="13">
    <original>H</original>
    <variation>A</variation>
    <location>
        <position position="156"/>
    </location>
</feature>
<feature type="mutagenesis site" description="Abolishes proteolytic cleavage." evidence="13">
    <original>E</original>
    <variation>Q</variation>
    <location>
        <position position="157"/>
    </location>
</feature>
<feature type="mutagenesis site" description="Abolishes proteolytic cleavage." evidence="13">
    <original>H</original>
    <variation>A</variation>
    <location>
        <position position="160"/>
    </location>
</feature>
<feature type="mutagenesis site" description="Abolishes proteolytic cleavage." evidence="13">
    <original>D</original>
    <variation>A</variation>
    <location>
        <position position="167"/>
    </location>
</feature>
<feature type="mutagenesis site" description="Abolishes proteolytic cleavage." evidence="13">
    <original>E</original>
    <variation>A</variation>
    <location>
        <position position="168"/>
    </location>
</feature>
<feature type="sequence conflict" description="In Ref. 3; BAF84688." evidence="16" ref="3">
    <original>F</original>
    <variation>S</variation>
    <location>
        <position position="393"/>
    </location>
</feature>
<feature type="strand" evidence="18">
    <location>
        <begin position="306"/>
        <end position="312"/>
    </location>
</feature>
<feature type="helix" evidence="18">
    <location>
        <begin position="315"/>
        <end position="318"/>
    </location>
</feature>
<feature type="helix" evidence="18">
    <location>
        <begin position="322"/>
        <end position="335"/>
    </location>
</feature>
<feature type="strand" evidence="18">
    <location>
        <begin position="343"/>
        <end position="361"/>
    </location>
</feature>
<feature type="helix" evidence="18">
    <location>
        <begin position="365"/>
        <end position="372"/>
    </location>
</feature>
<feature type="helix" evidence="18">
    <location>
        <begin position="385"/>
        <end position="397"/>
    </location>
</feature>
<feature type="strand" evidence="18">
    <location>
        <begin position="406"/>
        <end position="411"/>
    </location>
</feature>
<feature type="helix" evidence="18">
    <location>
        <begin position="418"/>
        <end position="421"/>
    </location>
</feature>
<feature type="helix" evidence="18">
    <location>
        <begin position="422"/>
        <end position="428"/>
    </location>
</feature>
<feature type="strand" evidence="18">
    <location>
        <begin position="431"/>
        <end position="436"/>
    </location>
</feature>
<feature type="helix" evidence="18">
    <location>
        <begin position="443"/>
        <end position="450"/>
    </location>
</feature>
<feature type="turn" evidence="18">
    <location>
        <begin position="451"/>
        <end position="453"/>
    </location>
</feature>
<feature type="strand" evidence="19">
    <location>
        <begin position="456"/>
        <end position="458"/>
    </location>
</feature>
<dbReference type="EC" id="3.4.-.-" evidence="13"/>
<dbReference type="EMBL" id="AF039400">
    <property type="protein sequence ID" value="AAC95428.1"/>
    <property type="molecule type" value="mRNA"/>
</dbReference>
<dbReference type="EMBL" id="AF039401">
    <property type="protein sequence ID" value="AAC95429.1"/>
    <property type="molecule type" value="Genomic_DNA"/>
</dbReference>
<dbReference type="EMBL" id="AF127036">
    <property type="protein sequence ID" value="AAD25487.1"/>
    <property type="molecule type" value="mRNA"/>
</dbReference>
<dbReference type="EMBL" id="AK291999">
    <property type="protein sequence ID" value="BAF84688.1"/>
    <property type="molecule type" value="mRNA"/>
</dbReference>
<dbReference type="EMBL" id="AK314375">
    <property type="protein sequence ID" value="BAG37002.1"/>
    <property type="molecule type" value="mRNA"/>
</dbReference>
<dbReference type="EMBL" id="AL122002">
    <property type="status" value="NOT_ANNOTATED_CDS"/>
    <property type="molecule type" value="Genomic_DNA"/>
</dbReference>
<dbReference type="EMBL" id="CH471097">
    <property type="protein sequence ID" value="EAW73186.1"/>
    <property type="molecule type" value="Genomic_DNA"/>
</dbReference>
<dbReference type="CCDS" id="CCDS709.1"/>
<dbReference type="RefSeq" id="NP_001276.3">
    <property type="nucleotide sequence ID" value="NM_001285.4"/>
</dbReference>
<dbReference type="PDB" id="6PYO">
    <property type="method" value="X-ray"/>
    <property type="resolution" value="2.00 A"/>
    <property type="chains" value="A/B=302-476"/>
</dbReference>
<dbReference type="PDB" id="6PYX">
    <property type="method" value="X-ray"/>
    <property type="resolution" value="2.60 A"/>
    <property type="chains" value="A/B=302-476"/>
</dbReference>
<dbReference type="PDBsum" id="6PYO"/>
<dbReference type="PDBsum" id="6PYX"/>
<dbReference type="SASBDB" id="A8K7I4"/>
<dbReference type="SMR" id="A8K7I4"/>
<dbReference type="BioGRID" id="107593">
    <property type="interactions" value="7"/>
</dbReference>
<dbReference type="FunCoup" id="A8K7I4">
    <property type="interactions" value="174"/>
</dbReference>
<dbReference type="IntAct" id="A8K7I4">
    <property type="interactions" value="4"/>
</dbReference>
<dbReference type="STRING" id="9606.ENSP00000234701"/>
<dbReference type="ChEMBL" id="CHEMBL2364708"/>
<dbReference type="MEROPS" id="M87.001"/>
<dbReference type="TCDB" id="1.A.13.1.6">
    <property type="family name" value="the epithelial chloride channel (e-clc) family"/>
</dbReference>
<dbReference type="GlyCosmos" id="A8K7I4">
    <property type="glycosylation" value="8 sites, No reported glycans"/>
</dbReference>
<dbReference type="GlyGen" id="A8K7I4">
    <property type="glycosylation" value="8 sites"/>
</dbReference>
<dbReference type="iPTMnet" id="A8K7I4"/>
<dbReference type="PhosphoSitePlus" id="A8K7I4"/>
<dbReference type="BioMuta" id="CLCA1"/>
<dbReference type="jPOST" id="A8K7I4"/>
<dbReference type="MassIVE" id="A8K7I4"/>
<dbReference type="PaxDb" id="9606-ENSP00000234701"/>
<dbReference type="PeptideAtlas" id="A8K7I4"/>
<dbReference type="ProteomicsDB" id="1869"/>
<dbReference type="Antibodypedia" id="33585">
    <property type="antibodies" value="213 antibodies from 31 providers"/>
</dbReference>
<dbReference type="DNASU" id="1179"/>
<dbReference type="Ensembl" id="ENST00000234701.7">
    <property type="protein sequence ID" value="ENSP00000234701.3"/>
    <property type="gene ID" value="ENSG00000016490.16"/>
</dbReference>
<dbReference type="Ensembl" id="ENST00000394711.2">
    <property type="protein sequence ID" value="ENSP00000378200.1"/>
    <property type="gene ID" value="ENSG00000016490.16"/>
</dbReference>
<dbReference type="GeneID" id="1179"/>
<dbReference type="KEGG" id="hsa:1179"/>
<dbReference type="MANE-Select" id="ENST00000394711.2">
    <property type="protein sequence ID" value="ENSP00000378200.1"/>
    <property type="RefSeq nucleotide sequence ID" value="NM_001285.4"/>
    <property type="RefSeq protein sequence ID" value="NP_001276.3"/>
</dbReference>
<dbReference type="UCSC" id="uc001dlt.4">
    <property type="organism name" value="human"/>
</dbReference>
<dbReference type="AGR" id="HGNC:2015"/>
<dbReference type="CTD" id="1179"/>
<dbReference type="DisGeNET" id="1179"/>
<dbReference type="GeneCards" id="CLCA1"/>
<dbReference type="HGNC" id="HGNC:2015">
    <property type="gene designation" value="CLCA1"/>
</dbReference>
<dbReference type="HPA" id="ENSG00000016490">
    <property type="expression patterns" value="Tissue enriched (intestine)"/>
</dbReference>
<dbReference type="MIM" id="603906">
    <property type="type" value="gene"/>
</dbReference>
<dbReference type="neXtProt" id="NX_A8K7I4"/>
<dbReference type="OpenTargets" id="ENSG00000016490"/>
<dbReference type="PharmGKB" id="PA26542"/>
<dbReference type="VEuPathDB" id="HostDB:ENSG00000016490"/>
<dbReference type="eggNOG" id="ENOG502QRRD">
    <property type="taxonomic scope" value="Eukaryota"/>
</dbReference>
<dbReference type="GeneTree" id="ENSGT00940000154682"/>
<dbReference type="HOGENOM" id="CLU_005812_0_1_1"/>
<dbReference type="InParanoid" id="A8K7I4"/>
<dbReference type="OMA" id="MQNQKCN"/>
<dbReference type="OrthoDB" id="687730at2759"/>
<dbReference type="PAN-GO" id="A8K7I4">
    <property type="GO annotations" value="2 GO annotations based on evolutionary models"/>
</dbReference>
<dbReference type="PhylomeDB" id="A8K7I4"/>
<dbReference type="TreeFam" id="TF328396"/>
<dbReference type="PathwayCommons" id="A8K7I4"/>
<dbReference type="Reactome" id="R-HSA-2672351">
    <property type="pathway name" value="Stimuli-sensing channels"/>
</dbReference>
<dbReference type="SignaLink" id="A8K7I4"/>
<dbReference type="BioGRID-ORCS" id="1179">
    <property type="hits" value="6 hits in 1144 CRISPR screens"/>
</dbReference>
<dbReference type="ChiTaRS" id="CLCA1">
    <property type="organism name" value="human"/>
</dbReference>
<dbReference type="GeneWiki" id="CLCA1"/>
<dbReference type="GenomeRNAi" id="1179"/>
<dbReference type="Pharos" id="A8K7I4">
    <property type="development level" value="Tbio"/>
</dbReference>
<dbReference type="PRO" id="PR:A8K7I4"/>
<dbReference type="Proteomes" id="UP000005640">
    <property type="component" value="Chromosome 1"/>
</dbReference>
<dbReference type="RNAct" id="A8K7I4">
    <property type="molecule type" value="protein"/>
</dbReference>
<dbReference type="Bgee" id="ENSG00000016490">
    <property type="expression patterns" value="Expressed in ileal mucosa and 94 other cell types or tissues"/>
</dbReference>
<dbReference type="GO" id="GO:0005576">
    <property type="term" value="C:extracellular region"/>
    <property type="evidence" value="ECO:0007669"/>
    <property type="project" value="UniProtKB-SubCell"/>
</dbReference>
<dbReference type="GO" id="GO:0005902">
    <property type="term" value="C:microvillus"/>
    <property type="evidence" value="ECO:0007669"/>
    <property type="project" value="Ensembl"/>
</dbReference>
<dbReference type="GO" id="GO:0005886">
    <property type="term" value="C:plasma membrane"/>
    <property type="evidence" value="ECO:0000318"/>
    <property type="project" value="GO_Central"/>
</dbReference>
<dbReference type="GO" id="GO:0042589">
    <property type="term" value="C:zymogen granule membrane"/>
    <property type="evidence" value="ECO:0007669"/>
    <property type="project" value="Ensembl"/>
</dbReference>
<dbReference type="GO" id="GO:0005254">
    <property type="term" value="F:chloride channel activity"/>
    <property type="evidence" value="ECO:0000304"/>
    <property type="project" value="ProtInc"/>
</dbReference>
<dbReference type="GO" id="GO:0005229">
    <property type="term" value="F:intracellularly calcium-gated chloride channel activity"/>
    <property type="evidence" value="ECO:0000318"/>
    <property type="project" value="GO_Central"/>
</dbReference>
<dbReference type="GO" id="GO:0046872">
    <property type="term" value="F:metal ion binding"/>
    <property type="evidence" value="ECO:0007669"/>
    <property type="project" value="UniProtKB-KW"/>
</dbReference>
<dbReference type="GO" id="GO:0004222">
    <property type="term" value="F:metalloendopeptidase activity"/>
    <property type="evidence" value="ECO:0000304"/>
    <property type="project" value="Reactome"/>
</dbReference>
<dbReference type="GO" id="GO:0006816">
    <property type="term" value="P:calcium ion transport"/>
    <property type="evidence" value="ECO:0007669"/>
    <property type="project" value="UniProtKB-KW"/>
</dbReference>
<dbReference type="GO" id="GO:0071456">
    <property type="term" value="P:cellular response to hypoxia"/>
    <property type="evidence" value="ECO:0007669"/>
    <property type="project" value="Ensembl"/>
</dbReference>
<dbReference type="GO" id="GO:0034220">
    <property type="term" value="P:monoatomic ion transmembrane transport"/>
    <property type="evidence" value="ECO:0000304"/>
    <property type="project" value="Reactome"/>
</dbReference>
<dbReference type="GO" id="GO:0006508">
    <property type="term" value="P:proteolysis"/>
    <property type="evidence" value="ECO:0007669"/>
    <property type="project" value="UniProtKB-KW"/>
</dbReference>
<dbReference type="CDD" id="cd00198">
    <property type="entry name" value="vWFA"/>
    <property type="match status" value="1"/>
</dbReference>
<dbReference type="FunFam" id="2.60.40.10:FF:001134">
    <property type="entry name" value="Calcium-activated chloride channel regulator 1"/>
    <property type="match status" value="1"/>
</dbReference>
<dbReference type="FunFam" id="3.40.50.410:FF:000034">
    <property type="entry name" value="calcium-activated chloride channel regulator 1"/>
    <property type="match status" value="1"/>
</dbReference>
<dbReference type="Gene3D" id="2.60.40.10">
    <property type="entry name" value="Immunoglobulins"/>
    <property type="match status" value="1"/>
</dbReference>
<dbReference type="Gene3D" id="3.40.50.410">
    <property type="entry name" value="von Willebrand factor, type A domain"/>
    <property type="match status" value="1"/>
</dbReference>
<dbReference type="InterPro" id="IPR004727">
    <property type="entry name" value="CLCA_chordata"/>
</dbReference>
<dbReference type="InterPro" id="IPR013642">
    <property type="entry name" value="CLCA_N"/>
</dbReference>
<dbReference type="InterPro" id="IPR051266">
    <property type="entry name" value="CLCR"/>
</dbReference>
<dbReference type="InterPro" id="IPR013783">
    <property type="entry name" value="Ig-like_fold"/>
</dbReference>
<dbReference type="InterPro" id="IPR002035">
    <property type="entry name" value="VWF_A"/>
</dbReference>
<dbReference type="InterPro" id="IPR036465">
    <property type="entry name" value="vWFA_dom_sf"/>
</dbReference>
<dbReference type="NCBIfam" id="NF041940">
    <property type="entry name" value="choice_anch_X"/>
    <property type="match status" value="1"/>
</dbReference>
<dbReference type="NCBIfam" id="TIGR00868">
    <property type="entry name" value="hCaCC"/>
    <property type="match status" value="1"/>
</dbReference>
<dbReference type="PANTHER" id="PTHR10579">
    <property type="entry name" value="CALCIUM-ACTIVATED CHLORIDE CHANNEL REGULATOR"/>
    <property type="match status" value="1"/>
</dbReference>
<dbReference type="PANTHER" id="PTHR10579:SF52">
    <property type="entry name" value="CALCIUM-ACTIVATED CHLORIDE CHANNEL REGULATOR 1"/>
    <property type="match status" value="1"/>
</dbReference>
<dbReference type="Pfam" id="PF08434">
    <property type="entry name" value="CLCA"/>
    <property type="match status" value="1"/>
</dbReference>
<dbReference type="Pfam" id="PF13519">
    <property type="entry name" value="VWA_2"/>
    <property type="match status" value="1"/>
</dbReference>
<dbReference type="SMART" id="SM00327">
    <property type="entry name" value="VWA"/>
    <property type="match status" value="1"/>
</dbReference>
<dbReference type="SUPFAM" id="SSF53300">
    <property type="entry name" value="vWA-like"/>
    <property type="match status" value="1"/>
</dbReference>
<dbReference type="PROSITE" id="PS50234">
    <property type="entry name" value="VWFA"/>
    <property type="match status" value="1"/>
</dbReference>
<comment type="function">
    <text evidence="4 5 6 13 14">May be involved in mediating calcium-activated chloride conductance. May play critical roles in goblet cell metaplasia, mucus hypersecretion, cystic fibrosis and AHR. May be involved in the regulation of mucus production and/or secretion by goblet cells. Involved in the regulation of tissue inflammation in the innate immune response. May play a role as a tumor suppressor. Induces MUC5AC.</text>
</comment>
<comment type="subcellular location">
    <subcellularLocation>
        <location evidence="9">Secreted</location>
        <location evidence="9">Extracellular space</location>
    </subcellularLocation>
    <subcellularLocation>
        <location evidence="9">Cell membrane</location>
        <topology evidence="9">Peripheral membrane protein</topology>
        <orientation evidence="9">Extracellular side</orientation>
    </subcellularLocation>
    <text>Protein that remains attached to the plasma membrane appeared to be predominantly localized to microvilli.</text>
</comment>
<comment type="tissue specificity">
    <text evidence="3 5 6 10 14">Highly expressed in small intestine and colon namely in intestinal basal crypt epithelia and goblet cells, and appendix. Weakly expressed in uterus, testis and kidney. Expressed in the airways epithelium of both asthmatic and healthy patients. Expressed in the bronchial epithelium, especially in mucus-producing goblet cells. Expressed in normal turbinate mucosa and nasal polyp. Expressed in.</text>
</comment>
<comment type="induction">
    <text evidence="4 5 6 8 10 11 12">By IL13/interleukin-13 in tracheobronchial epithelial cells. Up-regulated by histamine in a dose-dependent manner. Significantly down-regulated in colorectal cancer. Significantly up-regulated in the IL9-responsive mucus-producing epithelium of asthmatic patients. Significantly decreased in nasal polyp. Significantly increased by TNF in upper airway mucosa.</text>
</comment>
<comment type="domain">
    <text evidence="13">The metalloprotease region is responsible for autoproteolytic processing. It can also cross-cleave other CLCA substrates.</text>
</comment>
<comment type="PTM">
    <text evidence="14">Glycosylated.</text>
</comment>
<comment type="PTM">
    <text evidence="13 14">The 125-kDa product is autoproteolytically processed by the metalloprotease domain and yields to two cell-surface-associated subunits, a 90-kDa protein and a group of 37- to 41-kDa proteins. The cleavage is necessary for calcium-activated chloride channel (CaCC) activation activity.</text>
</comment>
<comment type="similarity">
    <text evidence="16">Belongs to the CLCR family.</text>
</comment>
<keyword id="KW-0002">3D-structure</keyword>
<keyword id="KW-0068">Autocatalytic cleavage</keyword>
<keyword id="KW-0106">Calcium</keyword>
<keyword id="KW-0109">Calcium transport</keyword>
<keyword id="KW-1003">Cell membrane</keyword>
<keyword id="KW-0868">Chloride</keyword>
<keyword id="KW-0903">Direct protein sequencing</keyword>
<keyword id="KW-0325">Glycoprotein</keyword>
<keyword id="KW-0378">Hydrolase</keyword>
<keyword id="KW-0406">Ion transport</keyword>
<keyword id="KW-0472">Membrane</keyword>
<keyword id="KW-0479">Metal-binding</keyword>
<keyword id="KW-0482">Metalloprotease</keyword>
<keyword id="KW-0645">Protease</keyword>
<keyword id="KW-1267">Proteomics identification</keyword>
<keyword id="KW-1185">Reference proteome</keyword>
<keyword id="KW-0964">Secreted</keyword>
<keyword id="KW-0732">Signal</keyword>
<keyword id="KW-0813">Transport</keyword>
<keyword id="KW-0862">Zinc</keyword>
<protein>
    <recommendedName>
        <fullName>Calcium-activated chloride channel regulator 1</fullName>
        <ecNumber evidence="13">3.4.-.-</ecNumber>
    </recommendedName>
    <alternativeName>
        <fullName>Calcium-activated chloride channel family member 1</fullName>
        <shortName>hCLCA1</shortName>
    </alternativeName>
    <alternativeName>
        <fullName>Calcium-activated chloride channel protein 1</fullName>
        <shortName>CaCC-1</shortName>
        <shortName>hCaCC-1</shortName>
    </alternativeName>
</protein>
<evidence type="ECO:0000255" key="1"/>
<evidence type="ECO:0000255" key="2">
    <source>
        <dbReference type="PROSITE-ProRule" id="PRU00219"/>
    </source>
</evidence>
<evidence type="ECO:0000269" key="3">
    <source>
    </source>
</evidence>
<evidence type="ECO:0000269" key="4">
    <source>
    </source>
</evidence>
<evidence type="ECO:0000269" key="5">
    <source>
    </source>
</evidence>
<evidence type="ECO:0000269" key="6">
    <source>
    </source>
</evidence>
<evidence type="ECO:0000269" key="7">
    <source>
    </source>
</evidence>
<evidence type="ECO:0000269" key="8">
    <source>
    </source>
</evidence>
<evidence type="ECO:0000269" key="9">
    <source>
    </source>
</evidence>
<evidence type="ECO:0000269" key="10">
    <source>
    </source>
</evidence>
<evidence type="ECO:0000269" key="11">
    <source>
    </source>
</evidence>
<evidence type="ECO:0000269" key="12">
    <source>
    </source>
</evidence>
<evidence type="ECO:0000269" key="13">
    <source>
    </source>
</evidence>
<evidence type="ECO:0000269" key="14">
    <source>
    </source>
</evidence>
<evidence type="ECO:0000269" key="15">
    <source ref="5"/>
</evidence>
<evidence type="ECO:0000305" key="16"/>
<evidence type="ECO:0000305" key="17">
    <source>
    </source>
</evidence>
<evidence type="ECO:0007829" key="18">
    <source>
        <dbReference type="PDB" id="6PYO"/>
    </source>
</evidence>
<evidence type="ECO:0007829" key="19">
    <source>
        <dbReference type="PDB" id="6PYX"/>
    </source>
</evidence>
<proteinExistence type="evidence at protein level"/>
<organism>
    <name type="scientific">Homo sapiens</name>
    <name type="common">Human</name>
    <dbReference type="NCBI Taxonomy" id="9606"/>
    <lineage>
        <taxon>Eukaryota</taxon>
        <taxon>Metazoa</taxon>
        <taxon>Chordata</taxon>
        <taxon>Craniata</taxon>
        <taxon>Vertebrata</taxon>
        <taxon>Euteleostomi</taxon>
        <taxon>Mammalia</taxon>
        <taxon>Eutheria</taxon>
        <taxon>Euarchontoglires</taxon>
        <taxon>Primates</taxon>
        <taxon>Haplorrhini</taxon>
        <taxon>Catarrhini</taxon>
        <taxon>Hominidae</taxon>
        <taxon>Homo</taxon>
    </lineage>
</organism>
<name>CLCA1_HUMAN</name>
<reference key="1">
    <citation type="journal article" date="1998" name="Genomics">
        <title>Genomic cloning, molecular characterization, and functional analysis of human CLCA1, the first human member of the family of Ca2+-activated Cl- channel proteins.</title>
        <authorList>
            <person name="Gruber A.D."/>
            <person name="Elble R.C."/>
            <person name="Ji H.-L."/>
            <person name="Schreur K.D."/>
            <person name="Fuller C.M."/>
            <person name="Pauli B.U."/>
        </authorList>
    </citation>
    <scope>NUCLEOTIDE SEQUENCE [GENOMIC DNA / MRNA]</scope>
    <scope>FUNCTION</scope>
    <scope>TISSUE SPECIFICITY</scope>
    <scope>GLYCOSYLATION</scope>
    <scope>PROTEOLYTIC PROCESSING</scope>
    <scope>VARIANTS PHE-65; LYS-152; SER-357; THR-524 AND ASN-760</scope>
    <source>
        <tissue>Small intestine</tissue>
    </source>
</reference>
<reference key="2">
    <citation type="journal article" date="1999" name="FEBS Lett.">
        <title>Identification of three novel members of the calcium-dependent chloride channel (CaCC) family predominantly expressed in the digestive tract and trachea.</title>
        <authorList>
            <person name="Agnel M."/>
            <person name="Vermat T."/>
            <person name="Culouscou J.-M."/>
        </authorList>
    </citation>
    <scope>NUCLEOTIDE SEQUENCE [MRNA]</scope>
    <scope>TISSUE SPECIFICITY</scope>
    <scope>VARIANTS PHE-65; SER-357 AND THR-524</scope>
    <source>
        <tissue>Small intestine</tissue>
    </source>
</reference>
<reference key="3">
    <citation type="journal article" date="2004" name="Nat. Genet.">
        <title>Complete sequencing and characterization of 21,243 full-length human cDNAs.</title>
        <authorList>
            <person name="Ota T."/>
            <person name="Suzuki Y."/>
            <person name="Nishikawa T."/>
            <person name="Otsuki T."/>
            <person name="Sugiyama T."/>
            <person name="Irie R."/>
            <person name="Wakamatsu A."/>
            <person name="Hayashi K."/>
            <person name="Sato H."/>
            <person name="Nagai K."/>
            <person name="Kimura K."/>
            <person name="Makita H."/>
            <person name="Sekine M."/>
            <person name="Obayashi M."/>
            <person name="Nishi T."/>
            <person name="Shibahara T."/>
            <person name="Tanaka T."/>
            <person name="Ishii S."/>
            <person name="Yamamoto J."/>
            <person name="Saito K."/>
            <person name="Kawai Y."/>
            <person name="Isono Y."/>
            <person name="Nakamura Y."/>
            <person name="Nagahari K."/>
            <person name="Murakami K."/>
            <person name="Yasuda T."/>
            <person name="Iwayanagi T."/>
            <person name="Wagatsuma M."/>
            <person name="Shiratori A."/>
            <person name="Sudo H."/>
            <person name="Hosoiri T."/>
            <person name="Kaku Y."/>
            <person name="Kodaira H."/>
            <person name="Kondo H."/>
            <person name="Sugawara M."/>
            <person name="Takahashi M."/>
            <person name="Kanda K."/>
            <person name="Yokoi T."/>
            <person name="Furuya T."/>
            <person name="Kikkawa E."/>
            <person name="Omura Y."/>
            <person name="Abe K."/>
            <person name="Kamihara K."/>
            <person name="Katsuta N."/>
            <person name="Sato K."/>
            <person name="Tanikawa M."/>
            <person name="Yamazaki M."/>
            <person name="Ninomiya K."/>
            <person name="Ishibashi T."/>
            <person name="Yamashita H."/>
            <person name="Murakawa K."/>
            <person name="Fujimori K."/>
            <person name="Tanai H."/>
            <person name="Kimata M."/>
            <person name="Watanabe M."/>
            <person name="Hiraoka S."/>
            <person name="Chiba Y."/>
            <person name="Ishida S."/>
            <person name="Ono Y."/>
            <person name="Takiguchi S."/>
            <person name="Watanabe S."/>
            <person name="Yosida M."/>
            <person name="Hotuta T."/>
            <person name="Kusano J."/>
            <person name="Kanehori K."/>
            <person name="Takahashi-Fujii A."/>
            <person name="Hara H."/>
            <person name="Tanase T.-O."/>
            <person name="Nomura Y."/>
            <person name="Togiya S."/>
            <person name="Komai F."/>
            <person name="Hara R."/>
            <person name="Takeuchi K."/>
            <person name="Arita M."/>
            <person name="Imose N."/>
            <person name="Musashino K."/>
            <person name="Yuuki H."/>
            <person name="Oshima A."/>
            <person name="Sasaki N."/>
            <person name="Aotsuka S."/>
            <person name="Yoshikawa Y."/>
            <person name="Matsunawa H."/>
            <person name="Ichihara T."/>
            <person name="Shiohata N."/>
            <person name="Sano S."/>
            <person name="Moriya S."/>
            <person name="Momiyama H."/>
            <person name="Satoh N."/>
            <person name="Takami S."/>
            <person name="Terashima Y."/>
            <person name="Suzuki O."/>
            <person name="Nakagawa S."/>
            <person name="Senoh A."/>
            <person name="Mizoguchi H."/>
            <person name="Goto Y."/>
            <person name="Shimizu F."/>
            <person name="Wakebe H."/>
            <person name="Hishigaki H."/>
            <person name="Watanabe T."/>
            <person name="Sugiyama A."/>
            <person name="Takemoto M."/>
            <person name="Kawakami B."/>
            <person name="Yamazaki M."/>
            <person name="Watanabe K."/>
            <person name="Kumagai A."/>
            <person name="Itakura S."/>
            <person name="Fukuzumi Y."/>
            <person name="Fujimori Y."/>
            <person name="Komiyama M."/>
            <person name="Tashiro H."/>
            <person name="Tanigami A."/>
            <person name="Fujiwara T."/>
            <person name="Ono T."/>
            <person name="Yamada K."/>
            <person name="Fujii Y."/>
            <person name="Ozaki K."/>
            <person name="Hirao M."/>
            <person name="Ohmori Y."/>
            <person name="Kawabata A."/>
            <person name="Hikiji T."/>
            <person name="Kobatake N."/>
            <person name="Inagaki H."/>
            <person name="Ikema Y."/>
            <person name="Okamoto S."/>
            <person name="Okitani R."/>
            <person name="Kawakami T."/>
            <person name="Noguchi S."/>
            <person name="Itoh T."/>
            <person name="Shigeta K."/>
            <person name="Senba T."/>
            <person name="Matsumura K."/>
            <person name="Nakajima Y."/>
            <person name="Mizuno T."/>
            <person name="Morinaga M."/>
            <person name="Sasaki M."/>
            <person name="Togashi T."/>
            <person name="Oyama M."/>
            <person name="Hata H."/>
            <person name="Watanabe M."/>
            <person name="Komatsu T."/>
            <person name="Mizushima-Sugano J."/>
            <person name="Satoh T."/>
            <person name="Shirai Y."/>
            <person name="Takahashi Y."/>
            <person name="Nakagawa K."/>
            <person name="Okumura K."/>
            <person name="Nagase T."/>
            <person name="Nomura N."/>
            <person name="Kikuchi H."/>
            <person name="Masuho Y."/>
            <person name="Yamashita R."/>
            <person name="Nakai K."/>
            <person name="Yada T."/>
            <person name="Nakamura Y."/>
            <person name="Ohara O."/>
            <person name="Isogai T."/>
            <person name="Sugano S."/>
        </authorList>
    </citation>
    <scope>NUCLEOTIDE SEQUENCE [LARGE SCALE MRNA]</scope>
    <scope>VARIANTS PHE-65; SER-357 AND THR-524</scope>
    <source>
        <tissue>Colon</tissue>
        <tissue>Small intestine</tissue>
    </source>
</reference>
<reference key="4">
    <citation type="journal article" date="2006" name="Nature">
        <title>The DNA sequence and biological annotation of human chromosome 1.</title>
        <authorList>
            <person name="Gregory S.G."/>
            <person name="Barlow K.F."/>
            <person name="McLay K.E."/>
            <person name="Kaul R."/>
            <person name="Swarbreck D."/>
            <person name="Dunham A."/>
            <person name="Scott C.E."/>
            <person name="Howe K.L."/>
            <person name="Woodfine K."/>
            <person name="Spencer C.C.A."/>
            <person name="Jones M.C."/>
            <person name="Gillson C."/>
            <person name="Searle S."/>
            <person name="Zhou Y."/>
            <person name="Kokocinski F."/>
            <person name="McDonald L."/>
            <person name="Evans R."/>
            <person name="Phillips K."/>
            <person name="Atkinson A."/>
            <person name="Cooper R."/>
            <person name="Jones C."/>
            <person name="Hall R.E."/>
            <person name="Andrews T.D."/>
            <person name="Lloyd C."/>
            <person name="Ainscough R."/>
            <person name="Almeida J.P."/>
            <person name="Ambrose K.D."/>
            <person name="Anderson F."/>
            <person name="Andrew R.W."/>
            <person name="Ashwell R.I.S."/>
            <person name="Aubin K."/>
            <person name="Babbage A.K."/>
            <person name="Bagguley C.L."/>
            <person name="Bailey J."/>
            <person name="Beasley H."/>
            <person name="Bethel G."/>
            <person name="Bird C.P."/>
            <person name="Bray-Allen S."/>
            <person name="Brown J.Y."/>
            <person name="Brown A.J."/>
            <person name="Buckley D."/>
            <person name="Burton J."/>
            <person name="Bye J."/>
            <person name="Carder C."/>
            <person name="Chapman J.C."/>
            <person name="Clark S.Y."/>
            <person name="Clarke G."/>
            <person name="Clee C."/>
            <person name="Cobley V."/>
            <person name="Collier R.E."/>
            <person name="Corby N."/>
            <person name="Coville G.J."/>
            <person name="Davies J."/>
            <person name="Deadman R."/>
            <person name="Dunn M."/>
            <person name="Earthrowl M."/>
            <person name="Ellington A.G."/>
            <person name="Errington H."/>
            <person name="Frankish A."/>
            <person name="Frankland J."/>
            <person name="French L."/>
            <person name="Garner P."/>
            <person name="Garnett J."/>
            <person name="Gay L."/>
            <person name="Ghori M.R.J."/>
            <person name="Gibson R."/>
            <person name="Gilby L.M."/>
            <person name="Gillett W."/>
            <person name="Glithero R.J."/>
            <person name="Grafham D.V."/>
            <person name="Griffiths C."/>
            <person name="Griffiths-Jones S."/>
            <person name="Grocock R."/>
            <person name="Hammond S."/>
            <person name="Harrison E.S.I."/>
            <person name="Hart E."/>
            <person name="Haugen E."/>
            <person name="Heath P.D."/>
            <person name="Holmes S."/>
            <person name="Holt K."/>
            <person name="Howden P.J."/>
            <person name="Hunt A.R."/>
            <person name="Hunt S.E."/>
            <person name="Hunter G."/>
            <person name="Isherwood J."/>
            <person name="James R."/>
            <person name="Johnson C."/>
            <person name="Johnson D."/>
            <person name="Joy A."/>
            <person name="Kay M."/>
            <person name="Kershaw J.K."/>
            <person name="Kibukawa M."/>
            <person name="Kimberley A.M."/>
            <person name="King A."/>
            <person name="Knights A.J."/>
            <person name="Lad H."/>
            <person name="Laird G."/>
            <person name="Lawlor S."/>
            <person name="Leongamornlert D.A."/>
            <person name="Lloyd D.M."/>
            <person name="Loveland J."/>
            <person name="Lovell J."/>
            <person name="Lush M.J."/>
            <person name="Lyne R."/>
            <person name="Martin S."/>
            <person name="Mashreghi-Mohammadi M."/>
            <person name="Matthews L."/>
            <person name="Matthews N.S.W."/>
            <person name="McLaren S."/>
            <person name="Milne S."/>
            <person name="Mistry S."/>
            <person name="Moore M.J.F."/>
            <person name="Nickerson T."/>
            <person name="O'Dell C.N."/>
            <person name="Oliver K."/>
            <person name="Palmeiri A."/>
            <person name="Palmer S.A."/>
            <person name="Parker A."/>
            <person name="Patel D."/>
            <person name="Pearce A.V."/>
            <person name="Peck A.I."/>
            <person name="Pelan S."/>
            <person name="Phelps K."/>
            <person name="Phillimore B.J."/>
            <person name="Plumb R."/>
            <person name="Rajan J."/>
            <person name="Raymond C."/>
            <person name="Rouse G."/>
            <person name="Saenphimmachak C."/>
            <person name="Sehra H.K."/>
            <person name="Sheridan E."/>
            <person name="Shownkeen R."/>
            <person name="Sims S."/>
            <person name="Skuce C.D."/>
            <person name="Smith M."/>
            <person name="Steward C."/>
            <person name="Subramanian S."/>
            <person name="Sycamore N."/>
            <person name="Tracey A."/>
            <person name="Tromans A."/>
            <person name="Van Helmond Z."/>
            <person name="Wall M."/>
            <person name="Wallis J.M."/>
            <person name="White S."/>
            <person name="Whitehead S.L."/>
            <person name="Wilkinson J.E."/>
            <person name="Willey D.L."/>
            <person name="Williams H."/>
            <person name="Wilming L."/>
            <person name="Wray P.W."/>
            <person name="Wu Z."/>
            <person name="Coulson A."/>
            <person name="Vaudin M."/>
            <person name="Sulston J.E."/>
            <person name="Durbin R.M."/>
            <person name="Hubbard T."/>
            <person name="Wooster R."/>
            <person name="Dunham I."/>
            <person name="Carter N.P."/>
            <person name="McVean G."/>
            <person name="Ross M.T."/>
            <person name="Harrow J."/>
            <person name="Olson M.V."/>
            <person name="Beck S."/>
            <person name="Rogers J."/>
            <person name="Bentley D.R."/>
        </authorList>
    </citation>
    <scope>NUCLEOTIDE SEQUENCE [LARGE SCALE GENOMIC DNA]</scope>
</reference>
<reference key="5">
    <citation type="submission" date="2005-09" db="EMBL/GenBank/DDBJ databases">
        <authorList>
            <person name="Mural R.J."/>
            <person name="Istrail S."/>
            <person name="Sutton G.G."/>
            <person name="Florea L."/>
            <person name="Halpern A.L."/>
            <person name="Mobarry C.M."/>
            <person name="Lippert R."/>
            <person name="Walenz B."/>
            <person name="Shatkay H."/>
            <person name="Dew I."/>
            <person name="Miller J.R."/>
            <person name="Flanigan M.J."/>
            <person name="Edwards N.J."/>
            <person name="Bolanos R."/>
            <person name="Fasulo D."/>
            <person name="Halldorsson B.V."/>
            <person name="Hannenhalli S."/>
            <person name="Turner R."/>
            <person name="Yooseph S."/>
            <person name="Lu F."/>
            <person name="Nusskern D.R."/>
            <person name="Shue B.C."/>
            <person name="Zheng X.H."/>
            <person name="Zhong F."/>
            <person name="Delcher A.L."/>
            <person name="Huson D.H."/>
            <person name="Kravitz S.A."/>
            <person name="Mouchard L."/>
            <person name="Reinert K."/>
            <person name="Remington K.A."/>
            <person name="Clark A.G."/>
            <person name="Waterman M.S."/>
            <person name="Eichler E.E."/>
            <person name="Adams M.D."/>
            <person name="Hunkapiller M.W."/>
            <person name="Myers E.W."/>
            <person name="Venter J.C."/>
        </authorList>
    </citation>
    <scope>NUCLEOTIDE SEQUENCE [LARGE SCALE GENOMIC DNA]</scope>
    <scope>VARIANTS PHE-65; SER-357 AND THR-524</scope>
</reference>
<reference key="6">
    <citation type="journal article" date="2012" name="J. Biol. Chem.">
        <title>Self-cleavage of human CLCA1 protein by a novel internal metalloprotease domain controls calcium-activated chloride channel activation.</title>
        <authorList>
            <person name="Yurtsever Z."/>
            <person name="Sala-Rabanal M."/>
            <person name="Randolph D.T."/>
            <person name="Scheaffer S.M."/>
            <person name="Roswit W.T."/>
            <person name="Alevy Y.G."/>
            <person name="Patel A.C."/>
            <person name="Heier R.F."/>
            <person name="Romero A.G."/>
            <person name="Nichols C.G."/>
            <person name="Holtzman M.J."/>
            <person name="Brett T.J."/>
        </authorList>
    </citation>
    <scope>PROTEIN SEQUENCE OF 695-699</scope>
    <scope>FUNCTION</scope>
    <scope>METALLOPROTEASE DOMAIN</scope>
    <scope>PROTEOLYTIC PROCESSING</scope>
    <scope>MUTAGENESIS OF GLN-150; HIS-156; GLU-157; HIS-160; ASP-167 AND GLU-168</scope>
</reference>
<reference key="7">
    <citation type="journal article" date="2001" name="DNA Cell Biol.">
        <title>Expression of the Ca2+-activated chloride channel genes CLCA1 and CLCA2 is downregulated in human colorectal cancer.</title>
        <authorList>
            <person name="Bustin S.A."/>
            <person name="Li S.-R."/>
            <person name="Dorudi S."/>
        </authorList>
    </citation>
    <scope>FUNCTION</scope>
    <scope>INDUCTION</scope>
</reference>
<reference key="8">
    <citation type="journal article" date="2002" name="Am. J. Respir. Crit. Care Med.">
        <title>Increased expression of the human Ca2+-activated Cl- channel 1 (CaCC1) gene in the asthmatic airway.</title>
        <authorList>
            <person name="Hoshino M."/>
            <person name="Morita S."/>
            <person name="Iwashita H."/>
            <person name="Sagiya Y."/>
            <person name="Nagi T."/>
            <person name="Nakanishi A."/>
            <person name="Ashida Y."/>
            <person name="Nishimura O."/>
            <person name="Fujisawa Y."/>
            <person name="Fujino M."/>
        </authorList>
    </citation>
    <scope>FUNCTION</scope>
    <scope>INDUCTION</scope>
    <scope>TISSUE SPECIFICITY</scope>
</reference>
<reference key="9">
    <citation type="journal article" date="2002" name="J. Allergy Clin. Immunol.">
        <title>A calcium-activated chloride channel (HCLCA1) is strongly related to IL-9 expression and mucus production in bronchial epithelium of patients with asthma.</title>
        <authorList>
            <person name="Toda M."/>
            <person name="Tulic M.K."/>
            <person name="Levitt R.C."/>
            <person name="Hamid Q."/>
        </authorList>
    </citation>
    <scope>FUNCTION</scope>
    <scope>INDUCTION</scope>
    <scope>TISSUE SPECIFICITY</scope>
</reference>
<reference key="10">
    <citation type="journal article" date="2005" name="Acta Oto-Laryngol.">
        <title>Expression and distribution of ion transport mRNAs in human nasal mucosa and nasal polyps.</title>
        <authorList>
            <person name="Lee S.H."/>
            <person name="Park J.H."/>
            <person name="Jung H.H."/>
            <person name="Lee S.H."/>
            <person name="Oh J.W."/>
            <person name="Lee H.M."/>
            <person name="Jun H.S."/>
            <person name="Cho W.J."/>
            <person name="Lee J.Y."/>
        </authorList>
    </citation>
    <scope>TISSUE SPECIFICITY</scope>
    <scope>INDUCTION</scope>
</reference>
<reference key="11">
    <citation type="journal article" date="2005" name="J. Allergy Clin. Immunol.">
        <title>Niflumic acid and MSI-2216 reduce TNF-alpha-induced mucin expression in human airway mucosa.</title>
        <authorList>
            <person name="Hauber H.-P."/>
            <person name="Daigneault P."/>
            <person name="Frenkiel S."/>
            <person name="Lavigne F."/>
            <person name="Hung H.-L."/>
            <person name="Levitt R.C."/>
            <person name="Hamid Q."/>
        </authorList>
    </citation>
    <scope>INDUCTION</scope>
</reference>
<reference key="12">
    <citation type="journal article" date="2005" name="J. Biol. Chem.">
        <title>hCLCA1 and mCLCA3 are secreted non-integral membrane proteins and therefore are not ion channels.</title>
        <authorList>
            <person name="Gibson A."/>
            <person name="Lewis A.P."/>
            <person name="Affleck K."/>
            <person name="Aitken A.J."/>
            <person name="Meldrum E."/>
            <person name="Thompson N."/>
        </authorList>
    </citation>
    <scope>SUBCELLULAR LOCATION</scope>
</reference>
<reference key="13">
    <citation type="journal article" date="2005" name="Am. J. Respir. Cell Mol. Biol.">
        <title>Differential regulation of MUC5AC/Muc5ac and hCLCA-1/mGob-5 expression in airway epithelium.</title>
        <authorList>
            <person name="Thai P."/>
            <person name="Chen Y."/>
            <person name="Dolganov G."/>
            <person name="Wu R."/>
        </authorList>
    </citation>
    <scope>INDUCTION</scope>
</reference>
<reference key="14">
    <citation type="journal article" date="2007" name="Pharmacology">
        <title>Histamine induces MUC5AC expression via a hCLCA1 pathway.</title>
        <authorList>
            <person name="Kim Y.M."/>
            <person name="Won T.-B."/>
            <person name="Kim S.W."/>
            <person name="Min Y.-G."/>
            <person name="Lee C.H."/>
            <person name="Rhee C.-S."/>
        </authorList>
    </citation>
    <scope>INDUCTION</scope>
</reference>
<gene>
    <name type="primary">CLCA1</name>
    <name type="synonym">CACC1</name>
</gene>
<accession>A8K7I4</accession>
<accession>B2RAV5</accession>
<accession>O95151</accession>
<accession>Q5TDF4</accession>
<accession>Q9UNF6</accession>
<accession>Q9UPC6</accession>
<sequence length="914" mass="100226">MGPFKSSVFILILHLLEGALSNSLIQLNNNGYEGIVVAIDPNVPEDETLIQQIKDMVTQASLYLLEATGKRFYFKNVAILIPETWKTKADYVRPKLETYKNADVLVAESTPPGNDEPYTEQMGNCGEKGERIHLTPDFIAGKKLAEYGPQGRAFVHEWAHLRWGVFDEYNNDEKFYLSNGRIQAVRCSAGITGTNVVKKCQGGSCYTKRCTFNKVTGLYEKGCEFVLQSRQTEKASIMFAQHVDSIVEFCTEQNHNKEAPNKQNQKCNLRSTWEVIRDSEDFKKTTPMTTQPPNPTFSLLQIGQRIVCLVLDKSGSMATGNRLNRLNQAGQLFLLQTVELGSWVGMVTFDSAAHVQNELIQINSGSDRDTLAKRLPAAASGGTSICSGLRSAFTVIRKKYPTDGSEIVLLTDGEDNTISGCFNEVKQSGAIIHTVALGPSAAQELEELSKMTGGLQTYASDQVQNNGLIDAFGALSSGNGAVSQRSIQLESKGLTLQNSQWMNGTVIVDSTVGKDTLFLITWTMQPPQILLWDPSGQKQGGFVVDKNTKMAYLQIPGIAKVGTWKYSLQASSQTLTLTVTSRASNATLPPITVTSKTNKDTSKFPSPLVVYANIRQGASPILRASVTALIESVNGKTVTLELLDNGAGADATKDDGVYSRYFTTYDTNGRYSVKVRALGGVNAARRRVIPQQSGALYIPGWIENDEIQWNPPRPEINKDDVQHKQVCFSRTSSGGSFVASDVPNAPIPDLFPPGQITDLKAEIHGGSLINLTWTAPGDDYDHGTAHKYIIRISTSILDLRDKFNESLQVNTTALIPKEANSEEVFLFKPENITFENGTDLFIAIQAVDKVDLKSEISNIARVSLFIPPQTPPETPSPDETSAPCPNIHINSTIPGIHILKIMWKWIGELQLSIA</sequence>